<proteinExistence type="inferred from homology"/>
<gene>
    <name evidence="1" type="primary">luxS</name>
    <name type="ordered locus">WS2126</name>
</gene>
<accession>Q7MQP3</accession>
<name>LUXS_WOLSU</name>
<organism>
    <name type="scientific">Wolinella succinogenes (strain ATCC 29543 / DSM 1740 / CCUG 13145 / JCM 31913 / LMG 7466 / NCTC 11488 / FDC 602W)</name>
    <name type="common">Vibrio succinogenes</name>
    <dbReference type="NCBI Taxonomy" id="273121"/>
    <lineage>
        <taxon>Bacteria</taxon>
        <taxon>Pseudomonadati</taxon>
        <taxon>Campylobacterota</taxon>
        <taxon>Epsilonproteobacteria</taxon>
        <taxon>Campylobacterales</taxon>
        <taxon>Helicobacteraceae</taxon>
        <taxon>Wolinella</taxon>
    </lineage>
</organism>
<evidence type="ECO:0000255" key="1">
    <source>
        <dbReference type="HAMAP-Rule" id="MF_00091"/>
    </source>
</evidence>
<reference key="1">
    <citation type="journal article" date="2003" name="Proc. Natl. Acad. Sci. U.S.A.">
        <title>Complete genome sequence and analysis of Wolinella succinogenes.</title>
        <authorList>
            <person name="Baar C."/>
            <person name="Eppinger M."/>
            <person name="Raddatz G."/>
            <person name="Simon J."/>
            <person name="Lanz C."/>
            <person name="Klimmek O."/>
            <person name="Nandakumar R."/>
            <person name="Gross R."/>
            <person name="Rosinus A."/>
            <person name="Keller H."/>
            <person name="Jagtap P."/>
            <person name="Linke B."/>
            <person name="Meyer F."/>
            <person name="Lederer H."/>
            <person name="Schuster S.C."/>
        </authorList>
    </citation>
    <scope>NUCLEOTIDE SEQUENCE [LARGE SCALE GENOMIC DNA]</scope>
    <source>
        <strain>ATCC 29543 / DSM 1740 / CCUG 13145 / JCM 31913 / LMG 7466 / NCTC 11488 / FDC 602W</strain>
    </source>
</reference>
<sequence length="163" mass="18429">MPLLDSFKVDHTKMPAPAVRLAKTMTTPKGDEIAVFDLRFCRPNQEILSEKGIHTLEHLFAGFMREHLNGEGIEIIDISPMGCRTGFYMSLIGVPKNARVLEAWRRSMEDILTLKSEEEIPELNIYQCGTACMHSLKEAQEIARTVLDRGISIMDNEALKLQL</sequence>
<keyword id="KW-0071">Autoinducer synthesis</keyword>
<keyword id="KW-0408">Iron</keyword>
<keyword id="KW-0456">Lyase</keyword>
<keyword id="KW-0479">Metal-binding</keyword>
<keyword id="KW-0673">Quorum sensing</keyword>
<keyword id="KW-1185">Reference proteome</keyword>
<comment type="function">
    <text evidence="1">Involved in the synthesis of autoinducer 2 (AI-2) which is secreted by bacteria and is used to communicate both the cell density and the metabolic potential of the environment. The regulation of gene expression in response to changes in cell density is called quorum sensing. Catalyzes the transformation of S-ribosylhomocysteine (RHC) to homocysteine (HC) and 4,5-dihydroxy-2,3-pentadione (DPD).</text>
</comment>
<comment type="catalytic activity">
    <reaction evidence="1">
        <text>S-(5-deoxy-D-ribos-5-yl)-L-homocysteine = (S)-4,5-dihydroxypentane-2,3-dione + L-homocysteine</text>
        <dbReference type="Rhea" id="RHEA:17753"/>
        <dbReference type="ChEBI" id="CHEBI:29484"/>
        <dbReference type="ChEBI" id="CHEBI:58195"/>
        <dbReference type="ChEBI" id="CHEBI:58199"/>
        <dbReference type="EC" id="4.4.1.21"/>
    </reaction>
</comment>
<comment type="cofactor">
    <cofactor evidence="1">
        <name>Fe cation</name>
        <dbReference type="ChEBI" id="CHEBI:24875"/>
    </cofactor>
    <text evidence="1">Binds 1 Fe cation per subunit.</text>
</comment>
<comment type="subunit">
    <text evidence="1">Homodimer.</text>
</comment>
<comment type="similarity">
    <text evidence="1">Belongs to the LuxS family.</text>
</comment>
<protein>
    <recommendedName>
        <fullName evidence="1">S-ribosylhomocysteine lyase</fullName>
        <ecNumber evidence="1">4.4.1.21</ecNumber>
    </recommendedName>
    <alternativeName>
        <fullName evidence="1">AI-2 synthesis protein</fullName>
    </alternativeName>
    <alternativeName>
        <fullName evidence="1">Autoinducer-2 production protein LuxS</fullName>
    </alternativeName>
</protein>
<dbReference type="EC" id="4.4.1.21" evidence="1"/>
<dbReference type="EMBL" id="BX571662">
    <property type="protein sequence ID" value="CAE11124.1"/>
    <property type="molecule type" value="Genomic_DNA"/>
</dbReference>
<dbReference type="RefSeq" id="WP_011139906.1">
    <property type="nucleotide sequence ID" value="NC_005090.1"/>
</dbReference>
<dbReference type="SMR" id="Q7MQP3"/>
<dbReference type="STRING" id="273121.WS2126"/>
<dbReference type="KEGG" id="wsu:WS2126"/>
<dbReference type="eggNOG" id="COG1854">
    <property type="taxonomic scope" value="Bacteria"/>
</dbReference>
<dbReference type="HOGENOM" id="CLU_107531_2_0_7"/>
<dbReference type="Proteomes" id="UP000000422">
    <property type="component" value="Chromosome"/>
</dbReference>
<dbReference type="GO" id="GO:0005506">
    <property type="term" value="F:iron ion binding"/>
    <property type="evidence" value="ECO:0007669"/>
    <property type="project" value="InterPro"/>
</dbReference>
<dbReference type="GO" id="GO:0043768">
    <property type="term" value="F:S-ribosylhomocysteine lyase activity"/>
    <property type="evidence" value="ECO:0007669"/>
    <property type="project" value="UniProtKB-UniRule"/>
</dbReference>
<dbReference type="GO" id="GO:0009372">
    <property type="term" value="P:quorum sensing"/>
    <property type="evidence" value="ECO:0007669"/>
    <property type="project" value="UniProtKB-UniRule"/>
</dbReference>
<dbReference type="Gene3D" id="3.30.1360.80">
    <property type="entry name" value="S-ribosylhomocysteinase (LuxS)"/>
    <property type="match status" value="1"/>
</dbReference>
<dbReference type="HAMAP" id="MF_00091">
    <property type="entry name" value="LuxS"/>
    <property type="match status" value="1"/>
</dbReference>
<dbReference type="InterPro" id="IPR037005">
    <property type="entry name" value="LuxS_sf"/>
</dbReference>
<dbReference type="InterPro" id="IPR011249">
    <property type="entry name" value="Metalloenz_LuxS/M16"/>
</dbReference>
<dbReference type="InterPro" id="IPR003815">
    <property type="entry name" value="S-ribosylhomocysteinase"/>
</dbReference>
<dbReference type="NCBIfam" id="NF002602">
    <property type="entry name" value="PRK02260.1-2"/>
    <property type="match status" value="1"/>
</dbReference>
<dbReference type="PANTHER" id="PTHR35799">
    <property type="entry name" value="S-RIBOSYLHOMOCYSTEINE LYASE"/>
    <property type="match status" value="1"/>
</dbReference>
<dbReference type="PANTHER" id="PTHR35799:SF1">
    <property type="entry name" value="S-RIBOSYLHOMOCYSTEINE LYASE"/>
    <property type="match status" value="1"/>
</dbReference>
<dbReference type="Pfam" id="PF02664">
    <property type="entry name" value="LuxS"/>
    <property type="match status" value="1"/>
</dbReference>
<dbReference type="PIRSF" id="PIRSF006160">
    <property type="entry name" value="AI2"/>
    <property type="match status" value="1"/>
</dbReference>
<dbReference type="PRINTS" id="PR01487">
    <property type="entry name" value="LUXSPROTEIN"/>
</dbReference>
<dbReference type="SUPFAM" id="SSF63411">
    <property type="entry name" value="LuxS/MPP-like metallohydrolase"/>
    <property type="match status" value="1"/>
</dbReference>
<feature type="chain" id="PRO_0000172279" description="S-ribosylhomocysteine lyase">
    <location>
        <begin position="1"/>
        <end position="163"/>
    </location>
</feature>
<feature type="binding site" evidence="1">
    <location>
        <position position="54"/>
    </location>
    <ligand>
        <name>Fe cation</name>
        <dbReference type="ChEBI" id="CHEBI:24875"/>
    </ligand>
</feature>
<feature type="binding site" evidence="1">
    <location>
        <position position="58"/>
    </location>
    <ligand>
        <name>Fe cation</name>
        <dbReference type="ChEBI" id="CHEBI:24875"/>
    </ligand>
</feature>
<feature type="binding site" evidence="1">
    <location>
        <position position="128"/>
    </location>
    <ligand>
        <name>Fe cation</name>
        <dbReference type="ChEBI" id="CHEBI:24875"/>
    </ligand>
</feature>